<accession>P57665</accession>
<comment type="function">
    <text evidence="1">3'-to-5' exoribonuclease specific for small oligoribonucleotides.</text>
</comment>
<comment type="subcellular location">
    <subcellularLocation>
        <location evidence="1">Cytoplasm</location>
    </subcellularLocation>
</comment>
<comment type="similarity">
    <text evidence="1">Belongs to the oligoribonuclease family.</text>
</comment>
<feature type="chain" id="PRO_0000111061" description="Oligoribonuclease">
    <location>
        <begin position="1"/>
        <end position="180"/>
    </location>
</feature>
<feature type="domain" description="Exonuclease" evidence="1">
    <location>
        <begin position="7"/>
        <end position="170"/>
    </location>
</feature>
<feature type="active site" evidence="1">
    <location>
        <position position="128"/>
    </location>
</feature>
<feature type="strand" evidence="3">
    <location>
        <begin position="7"/>
        <end position="17"/>
    </location>
</feature>
<feature type="turn" evidence="3">
    <location>
        <begin position="19"/>
        <end position="21"/>
    </location>
</feature>
<feature type="strand" evidence="3">
    <location>
        <begin position="24"/>
        <end position="32"/>
    </location>
</feature>
<feature type="strand" evidence="3">
    <location>
        <begin position="38"/>
        <end position="41"/>
    </location>
</feature>
<feature type="helix" evidence="3">
    <location>
        <begin position="51"/>
        <end position="55"/>
    </location>
</feature>
<feature type="helix" evidence="3">
    <location>
        <begin position="59"/>
        <end position="67"/>
    </location>
</feature>
<feature type="helix" evidence="3">
    <location>
        <begin position="70"/>
        <end position="76"/>
    </location>
</feature>
<feature type="helix" evidence="3">
    <location>
        <begin position="81"/>
        <end position="92"/>
    </location>
</feature>
<feature type="turn" evidence="3">
    <location>
        <begin position="93"/>
        <end position="95"/>
    </location>
</feature>
<feature type="turn" evidence="2">
    <location>
        <begin position="98"/>
        <end position="100"/>
    </location>
</feature>
<feature type="strand" evidence="3">
    <location>
        <begin position="103"/>
        <end position="107"/>
    </location>
</feature>
<feature type="helix" evidence="3">
    <location>
        <begin position="108"/>
        <end position="118"/>
    </location>
</feature>
<feature type="helix" evidence="3">
    <location>
        <begin position="120"/>
        <end position="125"/>
    </location>
</feature>
<feature type="strand" evidence="3">
    <location>
        <begin position="130"/>
        <end position="132"/>
    </location>
</feature>
<feature type="helix" evidence="3">
    <location>
        <begin position="133"/>
        <end position="143"/>
    </location>
</feature>
<feature type="helix" evidence="3">
    <location>
        <begin position="145"/>
        <end position="150"/>
    </location>
</feature>
<feature type="helix" evidence="3">
    <location>
        <begin position="159"/>
        <end position="176"/>
    </location>
</feature>
<name>ORN_PSEAE</name>
<reference key="1">
    <citation type="journal article" date="2000" name="Nature">
        <title>Complete genome sequence of Pseudomonas aeruginosa PAO1, an opportunistic pathogen.</title>
        <authorList>
            <person name="Stover C.K."/>
            <person name="Pham X.-Q.T."/>
            <person name="Erwin A.L."/>
            <person name="Mizoguchi S.D."/>
            <person name="Warrener P."/>
            <person name="Hickey M.J."/>
            <person name="Brinkman F.S.L."/>
            <person name="Hufnagle W.O."/>
            <person name="Kowalik D.J."/>
            <person name="Lagrou M."/>
            <person name="Garber R.L."/>
            <person name="Goltry L."/>
            <person name="Tolentino E."/>
            <person name="Westbrock-Wadman S."/>
            <person name="Yuan Y."/>
            <person name="Brody L.L."/>
            <person name="Coulter S.N."/>
            <person name="Folger K.R."/>
            <person name="Kas A."/>
            <person name="Larbig K."/>
            <person name="Lim R.M."/>
            <person name="Smith K.A."/>
            <person name="Spencer D.H."/>
            <person name="Wong G.K.-S."/>
            <person name="Wu Z."/>
            <person name="Paulsen I.T."/>
            <person name="Reizer J."/>
            <person name="Saier M.H. Jr."/>
            <person name="Hancock R.E.W."/>
            <person name="Lory S."/>
            <person name="Olson M.V."/>
        </authorList>
    </citation>
    <scope>NUCLEOTIDE SEQUENCE [LARGE SCALE GENOMIC DNA]</scope>
    <source>
        <strain>ATCC 15692 / DSM 22644 / CIP 104116 / JCM 14847 / LMG 12228 / 1C / PRS 101 / PAO1</strain>
    </source>
</reference>
<sequence>MQNPQNLIWIDLEMTGLDPDRDVIIEMATIVTDSDLNTLAEGPVIAIHQPEEILAGMDEWNTRQHGQSGLTQRVRESTVSMAEAEAQTLAFLEQWVPKRSSPICGNSICQDRRFLYRHMPRLEGYFHYRNLDVSTLKELAARWAPQVRESFKKGNTHLALDDIRESIAELRHYRDHFIKL</sequence>
<protein>
    <recommendedName>
        <fullName evidence="1">Oligoribonuclease</fullName>
        <ecNumber evidence="1">3.1.15.-</ecNumber>
    </recommendedName>
</protein>
<gene>
    <name evidence="1" type="primary">orn</name>
    <name type="ordered locus">PA4951</name>
</gene>
<organism>
    <name type="scientific">Pseudomonas aeruginosa (strain ATCC 15692 / DSM 22644 / CIP 104116 / JCM 14847 / LMG 12228 / 1C / PRS 101 / PAO1)</name>
    <dbReference type="NCBI Taxonomy" id="208964"/>
    <lineage>
        <taxon>Bacteria</taxon>
        <taxon>Pseudomonadati</taxon>
        <taxon>Pseudomonadota</taxon>
        <taxon>Gammaproteobacteria</taxon>
        <taxon>Pseudomonadales</taxon>
        <taxon>Pseudomonadaceae</taxon>
        <taxon>Pseudomonas</taxon>
    </lineage>
</organism>
<dbReference type="EC" id="3.1.15.-" evidence="1"/>
<dbReference type="EMBL" id="AE004091">
    <property type="protein sequence ID" value="AAG08336.1"/>
    <property type="molecule type" value="Genomic_DNA"/>
</dbReference>
<dbReference type="PIR" id="E83026">
    <property type="entry name" value="E83026"/>
</dbReference>
<dbReference type="RefSeq" id="NP_253638.1">
    <property type="nucleotide sequence ID" value="NC_002516.2"/>
</dbReference>
<dbReference type="RefSeq" id="WP_003095671.1">
    <property type="nucleotide sequence ID" value="NZ_QZGE01000002.1"/>
</dbReference>
<dbReference type="PDB" id="7V9Z">
    <property type="method" value="X-ray"/>
    <property type="resolution" value="1.85 A"/>
    <property type="chains" value="A/B=1-180"/>
</dbReference>
<dbReference type="PDB" id="7VA2">
    <property type="method" value="X-ray"/>
    <property type="resolution" value="2.30 A"/>
    <property type="chains" value="A/B=1-180"/>
</dbReference>
<dbReference type="PDB" id="7VA3">
    <property type="method" value="X-ray"/>
    <property type="resolution" value="1.80 A"/>
    <property type="chains" value="A/B=1-180"/>
</dbReference>
<dbReference type="PDB" id="7VA6">
    <property type="method" value="X-ray"/>
    <property type="resolution" value="2.10 A"/>
    <property type="chains" value="A/B=1-180"/>
</dbReference>
<dbReference type="PDBsum" id="7V9Z"/>
<dbReference type="PDBsum" id="7VA2"/>
<dbReference type="PDBsum" id="7VA3"/>
<dbReference type="PDBsum" id="7VA6"/>
<dbReference type="SMR" id="P57665"/>
<dbReference type="FunCoup" id="P57665">
    <property type="interactions" value="509"/>
</dbReference>
<dbReference type="STRING" id="208964.PA4951"/>
<dbReference type="PaxDb" id="208964-PA4951"/>
<dbReference type="GeneID" id="878205"/>
<dbReference type="KEGG" id="pae:PA4951"/>
<dbReference type="PATRIC" id="fig|208964.12.peg.5184"/>
<dbReference type="PseudoCAP" id="PA4951"/>
<dbReference type="HOGENOM" id="CLU_064761_2_0_6"/>
<dbReference type="InParanoid" id="P57665"/>
<dbReference type="OrthoDB" id="9801329at2"/>
<dbReference type="PhylomeDB" id="P57665"/>
<dbReference type="BioCyc" id="PAER208964:G1FZ6-5067-MONOMER"/>
<dbReference type="BRENDA" id="3.1.13.3">
    <property type="organism ID" value="5087"/>
</dbReference>
<dbReference type="PHI-base" id="PHI:6274"/>
<dbReference type="Proteomes" id="UP000002438">
    <property type="component" value="Chromosome"/>
</dbReference>
<dbReference type="GO" id="GO:0005737">
    <property type="term" value="C:cytoplasm"/>
    <property type="evidence" value="ECO:0007669"/>
    <property type="project" value="UniProtKB-SubCell"/>
</dbReference>
<dbReference type="GO" id="GO:0000175">
    <property type="term" value="F:3'-5'-RNA exonuclease activity"/>
    <property type="evidence" value="ECO:0007669"/>
    <property type="project" value="InterPro"/>
</dbReference>
<dbReference type="GO" id="GO:0003676">
    <property type="term" value="F:nucleic acid binding"/>
    <property type="evidence" value="ECO:0007669"/>
    <property type="project" value="InterPro"/>
</dbReference>
<dbReference type="GO" id="GO:0006259">
    <property type="term" value="P:DNA metabolic process"/>
    <property type="evidence" value="ECO:0007669"/>
    <property type="project" value="UniProtKB-ARBA"/>
</dbReference>
<dbReference type="CDD" id="cd06135">
    <property type="entry name" value="Orn"/>
    <property type="match status" value="1"/>
</dbReference>
<dbReference type="FunFam" id="3.30.420.10:FF:000003">
    <property type="entry name" value="Oligoribonuclease"/>
    <property type="match status" value="1"/>
</dbReference>
<dbReference type="Gene3D" id="3.30.420.10">
    <property type="entry name" value="Ribonuclease H-like superfamily/Ribonuclease H"/>
    <property type="match status" value="1"/>
</dbReference>
<dbReference type="HAMAP" id="MF_00045">
    <property type="entry name" value="Oligoribonuclease"/>
    <property type="match status" value="1"/>
</dbReference>
<dbReference type="InterPro" id="IPR013520">
    <property type="entry name" value="Exonuclease_RNaseT/DNA_pol3"/>
</dbReference>
<dbReference type="InterPro" id="IPR022894">
    <property type="entry name" value="Oligoribonuclease"/>
</dbReference>
<dbReference type="InterPro" id="IPR012337">
    <property type="entry name" value="RNaseH-like_sf"/>
</dbReference>
<dbReference type="InterPro" id="IPR036397">
    <property type="entry name" value="RNaseH_sf"/>
</dbReference>
<dbReference type="NCBIfam" id="NF003765">
    <property type="entry name" value="PRK05359.1"/>
    <property type="match status" value="1"/>
</dbReference>
<dbReference type="PANTHER" id="PTHR11046">
    <property type="entry name" value="OLIGORIBONUCLEASE, MITOCHONDRIAL"/>
    <property type="match status" value="1"/>
</dbReference>
<dbReference type="PANTHER" id="PTHR11046:SF0">
    <property type="entry name" value="OLIGORIBONUCLEASE, MITOCHONDRIAL"/>
    <property type="match status" value="1"/>
</dbReference>
<dbReference type="Pfam" id="PF00929">
    <property type="entry name" value="RNase_T"/>
    <property type="match status" value="1"/>
</dbReference>
<dbReference type="SMART" id="SM00479">
    <property type="entry name" value="EXOIII"/>
    <property type="match status" value="1"/>
</dbReference>
<dbReference type="SUPFAM" id="SSF53098">
    <property type="entry name" value="Ribonuclease H-like"/>
    <property type="match status" value="1"/>
</dbReference>
<proteinExistence type="evidence at protein level"/>
<evidence type="ECO:0000255" key="1">
    <source>
        <dbReference type="HAMAP-Rule" id="MF_00045"/>
    </source>
</evidence>
<evidence type="ECO:0007829" key="2">
    <source>
        <dbReference type="PDB" id="7VA2"/>
    </source>
</evidence>
<evidence type="ECO:0007829" key="3">
    <source>
        <dbReference type="PDB" id="7VA3"/>
    </source>
</evidence>
<keyword id="KW-0002">3D-structure</keyword>
<keyword id="KW-0963">Cytoplasm</keyword>
<keyword id="KW-0269">Exonuclease</keyword>
<keyword id="KW-0378">Hydrolase</keyword>
<keyword id="KW-0540">Nuclease</keyword>
<keyword id="KW-1185">Reference proteome</keyword>